<keyword id="KW-0025">Alternative splicing</keyword>
<keyword id="KW-0963">Cytoplasm</keyword>
<keyword id="KW-0328">Glycosyltransferase</keyword>
<keyword id="KW-0539">Nucleus</keyword>
<keyword id="KW-1185">Reference proteome</keyword>
<keyword id="KW-0808">Transferase</keyword>
<feature type="chain" id="PRO_0000311089" description="tRNA-queuosine alpha-mannosyltransferase">
    <location>
        <begin position="1"/>
        <end position="445"/>
    </location>
</feature>
<feature type="region of interest" description="Disordered" evidence="2">
    <location>
        <begin position="199"/>
        <end position="227"/>
    </location>
</feature>
<feature type="compositionally biased region" description="Basic and acidic residues" evidence="2">
    <location>
        <begin position="210"/>
        <end position="227"/>
    </location>
</feature>
<feature type="splice variant" id="VSP_029381" description="In isoform 3." evidence="3">
    <original>TLFASSVLNLTELAALRPDLGKLKKILYFHENQLVYPVKKYQERDF</original>
    <variation>RRRSWNCCCVPDHRTGFTFCLTVSKNNTEKFFLARDWTSELRSSLF</variation>
    <location>
        <begin position="61"/>
        <end position="106"/>
    </location>
</feature>
<feature type="splice variant" id="VSP_029382" description="In isoform 3." evidence="3">
    <location>
        <begin position="107"/>
        <end position="445"/>
    </location>
</feature>
<feature type="splice variant" id="VSP_029380" description="In isoform 2." evidence="3">
    <location>
        <begin position="280"/>
        <end position="445"/>
    </location>
</feature>
<protein>
    <recommendedName>
        <fullName evidence="4">tRNA-queuosine alpha-mannosyltransferase</fullName>
        <shortName evidence="4">QTMAN</shortName>
        <ecNumber evidence="1">2.4.1.110</ecNumber>
    </recommendedName>
    <alternativeName>
        <fullName evidence="4">Glycosyltransferase-like domain-containing protein 1</fullName>
    </alternativeName>
</protein>
<name>QTMAN_MOUSE</name>
<comment type="function">
    <text evidence="1">Glycosyltransferase that specifically catalyzes mannosylation of cytoplasmic tRNA(Asp) modified with queuosine at position 34 (queuosine(34)). Mannosylates the cyclopentene moiety of queuosine(34) in tRNA(Asp) to form mannosyl-queuosine(34). Mannosylation of queuosine(34) in tRNA(Asp) is required to slow-down elongation at cognate codons, GAC and GAU, thereby regulating protein translation.</text>
</comment>
<comment type="catalytic activity">
    <reaction evidence="1">
        <text>queuosine(34) in tRNA(Asp) + GDP-alpha-D-mannose = O-4''-alpha-D-mannosylqueuosine(34) in tRNA(Asp) + GDP + H(+)</text>
        <dbReference type="Rhea" id="RHEA:12885"/>
        <dbReference type="Rhea" id="RHEA-COMP:18572"/>
        <dbReference type="Rhea" id="RHEA-COMP:18581"/>
        <dbReference type="ChEBI" id="CHEBI:15378"/>
        <dbReference type="ChEBI" id="CHEBI:57527"/>
        <dbReference type="ChEBI" id="CHEBI:58189"/>
        <dbReference type="ChEBI" id="CHEBI:194431"/>
        <dbReference type="ChEBI" id="CHEBI:194442"/>
        <dbReference type="EC" id="2.4.1.110"/>
    </reaction>
    <physiologicalReaction direction="left-to-right" evidence="1">
        <dbReference type="Rhea" id="RHEA:12886"/>
    </physiologicalReaction>
</comment>
<comment type="subcellular location">
    <subcellularLocation>
        <location evidence="1">Cytoplasm</location>
    </subcellularLocation>
    <subcellularLocation>
        <location evidence="1">Nucleus</location>
    </subcellularLocation>
</comment>
<comment type="alternative products">
    <event type="alternative splicing"/>
    <isoform>
        <id>Q8BW56-1</id>
        <name>1</name>
        <sequence type="displayed"/>
    </isoform>
    <isoform>
        <id>Q8BW56-2</id>
        <name>2</name>
        <sequence type="described" ref="VSP_029380"/>
    </isoform>
    <isoform>
        <id>Q8BW56-3</id>
        <name>3</name>
        <sequence type="described" ref="VSP_029381 VSP_029382"/>
    </isoform>
</comment>
<comment type="similarity">
    <text evidence="4">Belongs to the glycosyltransferase group 1 family. Glycosyltransferase 4 subfamily.</text>
</comment>
<comment type="sequence caution" evidence="4">
    <conflict type="erroneous initiation">
        <sequence resource="EMBL-CDS" id="AAH52069"/>
    </conflict>
</comment>
<comment type="sequence caution" evidence="4">
    <conflict type="erroneous initiation">
        <sequence resource="EMBL-CDS" id="BAC35713"/>
    </conflict>
</comment>
<sequence length="445" mass="51017">MSIVIIEAFYGGSHRQLVELLREELDDCVLYTLPAKKWHWRARTAALYFSQNIPSSEHYRTLFASSVLNLTELAALRPDLGKLKKILYFHENQLVYPVKKYQERDFQYGYNQILSCLVADVVVFNSSFNMESFLTSIGKFLKLIPDHRPKDLESIIRPKCQVIYFPIRFPDVSRFMPKHKIAHLRRMLSLIGDAAASQSVAPCPQPGQRVSEKSPENCESKSDEHPDLDAEQEALDNPSVHKSGSLPVSKENLPLDPSTLLCGAEDPQRPLHITWPHRWEHDKDPETFLKILMSLKQLNLNFHVSVLGETFTDTPDIFSEAKKALGSSVLHWGYLPRKEDYFRVLCMADVVISTAKHEFFGVAMLEAVYCGCYPLCPKALVYPEIFPAEYLYSTPEQLSKRLKSFCKRPDIIRKHLYKGEVAPFSWAALHGKFRSLLTTEPREDL</sequence>
<dbReference type="EC" id="2.4.1.110" evidence="1"/>
<dbReference type="EMBL" id="AK028468">
    <property type="protein sequence ID" value="BAC25967.1"/>
    <property type="molecule type" value="mRNA"/>
</dbReference>
<dbReference type="EMBL" id="AK054272">
    <property type="protein sequence ID" value="BAC35713.1"/>
    <property type="status" value="ALT_INIT"/>
    <property type="molecule type" value="mRNA"/>
</dbReference>
<dbReference type="EMBL" id="AK163943">
    <property type="protein sequence ID" value="BAE37544.1"/>
    <property type="molecule type" value="mRNA"/>
</dbReference>
<dbReference type="EMBL" id="AL844891">
    <property type="status" value="NOT_ANNOTATED_CDS"/>
    <property type="molecule type" value="Genomic_DNA"/>
</dbReference>
<dbReference type="EMBL" id="AL935057">
    <property type="status" value="NOT_ANNOTATED_CDS"/>
    <property type="molecule type" value="Genomic_DNA"/>
</dbReference>
<dbReference type="EMBL" id="BX293544">
    <property type="status" value="NOT_ANNOTATED_CDS"/>
    <property type="molecule type" value="Genomic_DNA"/>
</dbReference>
<dbReference type="EMBL" id="BC052069">
    <property type="protein sequence ID" value="AAH52069.1"/>
    <property type="status" value="ALT_INIT"/>
    <property type="molecule type" value="mRNA"/>
</dbReference>
<dbReference type="CCDS" id="CCDS71050.1">
    <molecule id="Q8BW56-1"/>
</dbReference>
<dbReference type="RefSeq" id="NP_001349915.1">
    <molecule id="Q8BW56-1"/>
    <property type="nucleotide sequence ID" value="NM_001362986.1"/>
</dbReference>
<dbReference type="RefSeq" id="NP_001349916.1">
    <molecule id="Q8BW56-1"/>
    <property type="nucleotide sequence ID" value="NM_001362987.1"/>
</dbReference>
<dbReference type="RefSeq" id="NP_766250.2">
    <molecule id="Q8BW56-1"/>
    <property type="nucleotide sequence ID" value="NM_172662.3"/>
</dbReference>
<dbReference type="RefSeq" id="XP_011237391.1">
    <property type="nucleotide sequence ID" value="XM_011239089.2"/>
</dbReference>
<dbReference type="RefSeq" id="XP_011237392.1">
    <property type="nucleotide sequence ID" value="XM_011239090.2"/>
</dbReference>
<dbReference type="RefSeq" id="XP_011237393.1">
    <molecule id="Q8BW56-1"/>
    <property type="nucleotide sequence ID" value="XM_011239091.3"/>
</dbReference>
<dbReference type="FunCoup" id="Q8BW56">
    <property type="interactions" value="137"/>
</dbReference>
<dbReference type="STRING" id="10090.ENSMUSP00000108429"/>
<dbReference type="CAZy" id="GT4">
    <property type="family name" value="Glycosyltransferase Family 4"/>
</dbReference>
<dbReference type="iPTMnet" id="Q8BW56"/>
<dbReference type="PhosphoSitePlus" id="Q8BW56"/>
<dbReference type="PaxDb" id="10090-ENSMUSP00000108429"/>
<dbReference type="ProteomicsDB" id="270900">
    <molecule id="Q8BW56-1"/>
</dbReference>
<dbReference type="ProteomicsDB" id="270901">
    <molecule id="Q8BW56-2"/>
</dbReference>
<dbReference type="ProteomicsDB" id="270902">
    <molecule id="Q8BW56-3"/>
</dbReference>
<dbReference type="Pumba" id="Q8BW56"/>
<dbReference type="Antibodypedia" id="33618">
    <property type="antibodies" value="154 antibodies from 23 providers"/>
</dbReference>
<dbReference type="DNASU" id="227835"/>
<dbReference type="Ensembl" id="ENSMUST00000100127.9">
    <molecule id="Q8BW56-3"/>
    <property type="protein sequence ID" value="ENSMUSP00000097703.3"/>
    <property type="gene ID" value="ENSMUSG00000036890.14"/>
</dbReference>
<dbReference type="Ensembl" id="ENSMUST00000112810.8">
    <molecule id="Q8BW56-1"/>
    <property type="protein sequence ID" value="ENSMUSP00000108429.2"/>
    <property type="gene ID" value="ENSMUSG00000036890.14"/>
</dbReference>
<dbReference type="GeneID" id="227835"/>
<dbReference type="KEGG" id="mmu:227835"/>
<dbReference type="UCSC" id="uc008jpa.2">
    <molecule id="Q8BW56-1"/>
    <property type="organism name" value="mouse"/>
</dbReference>
<dbReference type="AGR" id="MGI:2444269"/>
<dbReference type="CTD" id="79712"/>
<dbReference type="MGI" id="MGI:2444269">
    <property type="gene designation" value="Gtdc1"/>
</dbReference>
<dbReference type="VEuPathDB" id="HostDB:ENSMUSG00000036890"/>
<dbReference type="eggNOG" id="ENOG502QQJ3">
    <property type="taxonomic scope" value="Eukaryota"/>
</dbReference>
<dbReference type="GeneTree" id="ENSGT00390000006631"/>
<dbReference type="HOGENOM" id="CLU_033439_1_0_1"/>
<dbReference type="InParanoid" id="Q8BW56"/>
<dbReference type="OMA" id="HRWEYDK"/>
<dbReference type="OrthoDB" id="10032790at2759"/>
<dbReference type="PhylomeDB" id="Q8BW56"/>
<dbReference type="TreeFam" id="TF324818"/>
<dbReference type="BioGRID-ORCS" id="227835">
    <property type="hits" value="1 hit in 73 CRISPR screens"/>
</dbReference>
<dbReference type="ChiTaRS" id="Gtdc1">
    <property type="organism name" value="mouse"/>
</dbReference>
<dbReference type="PRO" id="PR:Q8BW56"/>
<dbReference type="Proteomes" id="UP000000589">
    <property type="component" value="Chromosome 2"/>
</dbReference>
<dbReference type="RNAct" id="Q8BW56">
    <property type="molecule type" value="protein"/>
</dbReference>
<dbReference type="Bgee" id="ENSMUSG00000036890">
    <property type="expression patterns" value="Expressed in animal zygote and 229 other cell types or tissues"/>
</dbReference>
<dbReference type="ExpressionAtlas" id="Q8BW56">
    <property type="expression patterns" value="baseline and differential"/>
</dbReference>
<dbReference type="GO" id="GO:0005737">
    <property type="term" value="C:cytoplasm"/>
    <property type="evidence" value="ECO:0000250"/>
    <property type="project" value="UniProtKB"/>
</dbReference>
<dbReference type="GO" id="GO:0005634">
    <property type="term" value="C:nucleus"/>
    <property type="evidence" value="ECO:0000250"/>
    <property type="project" value="UniProtKB"/>
</dbReference>
<dbReference type="GO" id="GO:0016438">
    <property type="term" value="F:tRNA-queuosine(34) beta-mannosyltransferase activity"/>
    <property type="evidence" value="ECO:0000250"/>
    <property type="project" value="UniProtKB"/>
</dbReference>
<dbReference type="GO" id="GO:0006417">
    <property type="term" value="P:regulation of translation"/>
    <property type="evidence" value="ECO:0000250"/>
    <property type="project" value="UniProtKB"/>
</dbReference>
<dbReference type="GO" id="GO:0006400">
    <property type="term" value="P:tRNA modification"/>
    <property type="evidence" value="ECO:0000250"/>
    <property type="project" value="UniProtKB"/>
</dbReference>
<dbReference type="CDD" id="cd01635">
    <property type="entry name" value="Glycosyltransferase_GTB-type"/>
    <property type="match status" value="1"/>
</dbReference>
<dbReference type="Gene3D" id="3.40.50.2000">
    <property type="entry name" value="Glycogen Phosphorylase B"/>
    <property type="match status" value="1"/>
</dbReference>
<dbReference type="InterPro" id="IPR001296">
    <property type="entry name" value="Glyco_trans_1"/>
</dbReference>
<dbReference type="InterPro" id="IPR051862">
    <property type="entry name" value="GT-like_domain_containing_1"/>
</dbReference>
<dbReference type="InterPro" id="IPR022701">
    <property type="entry name" value="QTMAN_N"/>
</dbReference>
<dbReference type="PANTHER" id="PTHR13615">
    <property type="entry name" value="GLYCOSYLTRANSFERASE-LIKE 1"/>
    <property type="match status" value="1"/>
</dbReference>
<dbReference type="PANTHER" id="PTHR13615:SF3">
    <property type="entry name" value="GLYCOSYLTRANSFERASE-LIKE DOMAIN-CONTAINING PROTEIN 1"/>
    <property type="match status" value="1"/>
</dbReference>
<dbReference type="Pfam" id="PF00534">
    <property type="entry name" value="Glycos_transf_1"/>
    <property type="match status" value="1"/>
</dbReference>
<dbReference type="Pfam" id="PF12038">
    <property type="entry name" value="QTMAN_N"/>
    <property type="match status" value="1"/>
</dbReference>
<dbReference type="SUPFAM" id="SSF53756">
    <property type="entry name" value="UDP-Glycosyltransferase/glycogen phosphorylase"/>
    <property type="match status" value="1"/>
</dbReference>
<evidence type="ECO:0000250" key="1">
    <source>
        <dbReference type="UniProtKB" id="Q4AE62"/>
    </source>
</evidence>
<evidence type="ECO:0000256" key="2">
    <source>
        <dbReference type="SAM" id="MobiDB-lite"/>
    </source>
</evidence>
<evidence type="ECO:0000303" key="3">
    <source>
    </source>
</evidence>
<evidence type="ECO:0000305" key="4"/>
<evidence type="ECO:0000312" key="5">
    <source>
        <dbReference type="MGI" id="MGI:2444269"/>
    </source>
</evidence>
<gene>
    <name evidence="5" type="primary">Gtdc1</name>
    <name evidence="1" type="synonym">Qtman</name>
</gene>
<reference key="1">
    <citation type="journal article" date="2005" name="Science">
        <title>The transcriptional landscape of the mammalian genome.</title>
        <authorList>
            <person name="Carninci P."/>
            <person name="Kasukawa T."/>
            <person name="Katayama S."/>
            <person name="Gough J."/>
            <person name="Frith M.C."/>
            <person name="Maeda N."/>
            <person name="Oyama R."/>
            <person name="Ravasi T."/>
            <person name="Lenhard B."/>
            <person name="Wells C."/>
            <person name="Kodzius R."/>
            <person name="Shimokawa K."/>
            <person name="Bajic V.B."/>
            <person name="Brenner S.E."/>
            <person name="Batalov S."/>
            <person name="Forrest A.R."/>
            <person name="Zavolan M."/>
            <person name="Davis M.J."/>
            <person name="Wilming L.G."/>
            <person name="Aidinis V."/>
            <person name="Allen J.E."/>
            <person name="Ambesi-Impiombato A."/>
            <person name="Apweiler R."/>
            <person name="Aturaliya R.N."/>
            <person name="Bailey T.L."/>
            <person name="Bansal M."/>
            <person name="Baxter L."/>
            <person name="Beisel K.W."/>
            <person name="Bersano T."/>
            <person name="Bono H."/>
            <person name="Chalk A.M."/>
            <person name="Chiu K.P."/>
            <person name="Choudhary V."/>
            <person name="Christoffels A."/>
            <person name="Clutterbuck D.R."/>
            <person name="Crowe M.L."/>
            <person name="Dalla E."/>
            <person name="Dalrymple B.P."/>
            <person name="de Bono B."/>
            <person name="Della Gatta G."/>
            <person name="di Bernardo D."/>
            <person name="Down T."/>
            <person name="Engstrom P."/>
            <person name="Fagiolini M."/>
            <person name="Faulkner G."/>
            <person name="Fletcher C.F."/>
            <person name="Fukushima T."/>
            <person name="Furuno M."/>
            <person name="Futaki S."/>
            <person name="Gariboldi M."/>
            <person name="Georgii-Hemming P."/>
            <person name="Gingeras T.R."/>
            <person name="Gojobori T."/>
            <person name="Green R.E."/>
            <person name="Gustincich S."/>
            <person name="Harbers M."/>
            <person name="Hayashi Y."/>
            <person name="Hensch T.K."/>
            <person name="Hirokawa N."/>
            <person name="Hill D."/>
            <person name="Huminiecki L."/>
            <person name="Iacono M."/>
            <person name="Ikeo K."/>
            <person name="Iwama A."/>
            <person name="Ishikawa T."/>
            <person name="Jakt M."/>
            <person name="Kanapin A."/>
            <person name="Katoh M."/>
            <person name="Kawasawa Y."/>
            <person name="Kelso J."/>
            <person name="Kitamura H."/>
            <person name="Kitano H."/>
            <person name="Kollias G."/>
            <person name="Krishnan S.P."/>
            <person name="Kruger A."/>
            <person name="Kummerfeld S.K."/>
            <person name="Kurochkin I.V."/>
            <person name="Lareau L.F."/>
            <person name="Lazarevic D."/>
            <person name="Lipovich L."/>
            <person name="Liu J."/>
            <person name="Liuni S."/>
            <person name="McWilliam S."/>
            <person name="Madan Babu M."/>
            <person name="Madera M."/>
            <person name="Marchionni L."/>
            <person name="Matsuda H."/>
            <person name="Matsuzawa S."/>
            <person name="Miki H."/>
            <person name="Mignone F."/>
            <person name="Miyake S."/>
            <person name="Morris K."/>
            <person name="Mottagui-Tabar S."/>
            <person name="Mulder N."/>
            <person name="Nakano N."/>
            <person name="Nakauchi H."/>
            <person name="Ng P."/>
            <person name="Nilsson R."/>
            <person name="Nishiguchi S."/>
            <person name="Nishikawa S."/>
            <person name="Nori F."/>
            <person name="Ohara O."/>
            <person name="Okazaki Y."/>
            <person name="Orlando V."/>
            <person name="Pang K.C."/>
            <person name="Pavan W.J."/>
            <person name="Pavesi G."/>
            <person name="Pesole G."/>
            <person name="Petrovsky N."/>
            <person name="Piazza S."/>
            <person name="Reed J."/>
            <person name="Reid J.F."/>
            <person name="Ring B.Z."/>
            <person name="Ringwald M."/>
            <person name="Rost B."/>
            <person name="Ruan Y."/>
            <person name="Salzberg S.L."/>
            <person name="Sandelin A."/>
            <person name="Schneider C."/>
            <person name="Schoenbach C."/>
            <person name="Sekiguchi K."/>
            <person name="Semple C.A."/>
            <person name="Seno S."/>
            <person name="Sessa L."/>
            <person name="Sheng Y."/>
            <person name="Shibata Y."/>
            <person name="Shimada H."/>
            <person name="Shimada K."/>
            <person name="Silva D."/>
            <person name="Sinclair B."/>
            <person name="Sperling S."/>
            <person name="Stupka E."/>
            <person name="Sugiura K."/>
            <person name="Sultana R."/>
            <person name="Takenaka Y."/>
            <person name="Taki K."/>
            <person name="Tammoja K."/>
            <person name="Tan S.L."/>
            <person name="Tang S."/>
            <person name="Taylor M.S."/>
            <person name="Tegner J."/>
            <person name="Teichmann S.A."/>
            <person name="Ueda H.R."/>
            <person name="van Nimwegen E."/>
            <person name="Verardo R."/>
            <person name="Wei C.L."/>
            <person name="Yagi K."/>
            <person name="Yamanishi H."/>
            <person name="Zabarovsky E."/>
            <person name="Zhu S."/>
            <person name="Zimmer A."/>
            <person name="Hide W."/>
            <person name="Bult C."/>
            <person name="Grimmond S.M."/>
            <person name="Teasdale R.D."/>
            <person name="Liu E.T."/>
            <person name="Brusic V."/>
            <person name="Quackenbush J."/>
            <person name="Wahlestedt C."/>
            <person name="Mattick J.S."/>
            <person name="Hume D.A."/>
            <person name="Kai C."/>
            <person name="Sasaki D."/>
            <person name="Tomaru Y."/>
            <person name="Fukuda S."/>
            <person name="Kanamori-Katayama M."/>
            <person name="Suzuki M."/>
            <person name="Aoki J."/>
            <person name="Arakawa T."/>
            <person name="Iida J."/>
            <person name="Imamura K."/>
            <person name="Itoh M."/>
            <person name="Kato T."/>
            <person name="Kawaji H."/>
            <person name="Kawagashira N."/>
            <person name="Kawashima T."/>
            <person name="Kojima M."/>
            <person name="Kondo S."/>
            <person name="Konno H."/>
            <person name="Nakano K."/>
            <person name="Ninomiya N."/>
            <person name="Nishio T."/>
            <person name="Okada M."/>
            <person name="Plessy C."/>
            <person name="Shibata K."/>
            <person name="Shiraki T."/>
            <person name="Suzuki S."/>
            <person name="Tagami M."/>
            <person name="Waki K."/>
            <person name="Watahiki A."/>
            <person name="Okamura-Oho Y."/>
            <person name="Suzuki H."/>
            <person name="Kawai J."/>
            <person name="Hayashizaki Y."/>
        </authorList>
    </citation>
    <scope>NUCLEOTIDE SEQUENCE [LARGE SCALE MRNA] (ISOFORMS 1; 2 AND 3)</scope>
    <source>
        <strain>C57BL/6J</strain>
        <tissue>Cerebellum</tissue>
        <tissue>Ovary</tissue>
        <tissue>Skin</tissue>
    </source>
</reference>
<reference key="2">
    <citation type="journal article" date="2009" name="PLoS Biol.">
        <title>Lineage-specific biology revealed by a finished genome assembly of the mouse.</title>
        <authorList>
            <person name="Church D.M."/>
            <person name="Goodstadt L."/>
            <person name="Hillier L.W."/>
            <person name="Zody M.C."/>
            <person name="Goldstein S."/>
            <person name="She X."/>
            <person name="Bult C.J."/>
            <person name="Agarwala R."/>
            <person name="Cherry J.L."/>
            <person name="DiCuccio M."/>
            <person name="Hlavina W."/>
            <person name="Kapustin Y."/>
            <person name="Meric P."/>
            <person name="Maglott D."/>
            <person name="Birtle Z."/>
            <person name="Marques A.C."/>
            <person name="Graves T."/>
            <person name="Zhou S."/>
            <person name="Teague B."/>
            <person name="Potamousis K."/>
            <person name="Churas C."/>
            <person name="Place M."/>
            <person name="Herschleb J."/>
            <person name="Runnheim R."/>
            <person name="Forrest D."/>
            <person name="Amos-Landgraf J."/>
            <person name="Schwartz D.C."/>
            <person name="Cheng Z."/>
            <person name="Lindblad-Toh K."/>
            <person name="Eichler E.E."/>
            <person name="Ponting C.P."/>
        </authorList>
    </citation>
    <scope>NUCLEOTIDE SEQUENCE [LARGE SCALE GENOMIC DNA]</scope>
    <source>
        <strain>C57BL/6J</strain>
    </source>
</reference>
<reference key="3">
    <citation type="journal article" date="2004" name="Genome Res.">
        <title>The status, quality, and expansion of the NIH full-length cDNA project: the Mammalian Gene Collection (MGC).</title>
        <authorList>
            <consortium name="The MGC Project Team"/>
        </authorList>
    </citation>
    <scope>NUCLEOTIDE SEQUENCE [LARGE SCALE MRNA] OF 84-445</scope>
    <source>
        <strain>C57BL/6J</strain>
    </source>
</reference>
<accession>Q8BW56</accession>
<accession>A2AQR9</accession>
<accession>A2AQS2</accession>
<accession>A2AVU2</accession>
<accession>Q3TQ41</accession>
<accession>Q80US3</accession>
<accession>Q8C1B8</accession>
<organism>
    <name type="scientific">Mus musculus</name>
    <name type="common">Mouse</name>
    <dbReference type="NCBI Taxonomy" id="10090"/>
    <lineage>
        <taxon>Eukaryota</taxon>
        <taxon>Metazoa</taxon>
        <taxon>Chordata</taxon>
        <taxon>Craniata</taxon>
        <taxon>Vertebrata</taxon>
        <taxon>Euteleostomi</taxon>
        <taxon>Mammalia</taxon>
        <taxon>Eutheria</taxon>
        <taxon>Euarchontoglires</taxon>
        <taxon>Glires</taxon>
        <taxon>Rodentia</taxon>
        <taxon>Myomorpha</taxon>
        <taxon>Muroidea</taxon>
        <taxon>Muridae</taxon>
        <taxon>Murinae</taxon>
        <taxon>Mus</taxon>
        <taxon>Mus</taxon>
    </lineage>
</organism>
<proteinExistence type="evidence at transcript level"/>